<accession>Q65JP4</accession>
<accession>Q62V49</accession>
<protein>
    <recommendedName>
        <fullName evidence="1">Ribosome biogenesis GTPase A</fullName>
    </recommendedName>
</protein>
<dbReference type="EMBL" id="CP000002">
    <property type="protein sequence ID" value="AAU23360.1"/>
    <property type="molecule type" value="Genomic_DNA"/>
</dbReference>
<dbReference type="EMBL" id="AE017333">
    <property type="protein sequence ID" value="AAU40720.1"/>
    <property type="molecule type" value="Genomic_DNA"/>
</dbReference>
<dbReference type="RefSeq" id="WP_003181730.1">
    <property type="nucleotide sequence ID" value="NC_006322.1"/>
</dbReference>
<dbReference type="SMR" id="Q65JP4"/>
<dbReference type="STRING" id="279010.BL01289"/>
<dbReference type="GeneID" id="92861582"/>
<dbReference type="KEGG" id="bld:BLi01825"/>
<dbReference type="KEGG" id="bli:BL01289"/>
<dbReference type="eggNOG" id="COG1161">
    <property type="taxonomic scope" value="Bacteria"/>
</dbReference>
<dbReference type="HOGENOM" id="CLU_011106_1_0_9"/>
<dbReference type="Proteomes" id="UP000000606">
    <property type="component" value="Chromosome"/>
</dbReference>
<dbReference type="GO" id="GO:0005737">
    <property type="term" value="C:cytoplasm"/>
    <property type="evidence" value="ECO:0007669"/>
    <property type="project" value="UniProtKB-SubCell"/>
</dbReference>
<dbReference type="GO" id="GO:0005525">
    <property type="term" value="F:GTP binding"/>
    <property type="evidence" value="ECO:0007669"/>
    <property type="project" value="UniProtKB-KW"/>
</dbReference>
<dbReference type="GO" id="GO:0003924">
    <property type="term" value="F:GTPase activity"/>
    <property type="evidence" value="ECO:0007669"/>
    <property type="project" value="TreeGrafter"/>
</dbReference>
<dbReference type="GO" id="GO:0003723">
    <property type="term" value="F:RNA binding"/>
    <property type="evidence" value="ECO:0007669"/>
    <property type="project" value="UniProtKB-KW"/>
</dbReference>
<dbReference type="GO" id="GO:0042254">
    <property type="term" value="P:ribosome biogenesis"/>
    <property type="evidence" value="ECO:0007669"/>
    <property type="project" value="UniProtKB-KW"/>
</dbReference>
<dbReference type="GO" id="GO:0006412">
    <property type="term" value="P:translation"/>
    <property type="evidence" value="ECO:0007669"/>
    <property type="project" value="TreeGrafter"/>
</dbReference>
<dbReference type="CDD" id="cd00882">
    <property type="entry name" value="Ras_like_GTPase"/>
    <property type="match status" value="1"/>
</dbReference>
<dbReference type="CDD" id="cd01856">
    <property type="entry name" value="YlqF"/>
    <property type="match status" value="1"/>
</dbReference>
<dbReference type="FunFam" id="1.10.1580.10:FF:000003">
    <property type="entry name" value="Ribosome biogenesis GTPase A"/>
    <property type="match status" value="1"/>
</dbReference>
<dbReference type="FunFam" id="3.40.50.300:FF:000590">
    <property type="entry name" value="Ribosome biogenesis GTPase A"/>
    <property type="match status" value="1"/>
</dbReference>
<dbReference type="Gene3D" id="1.10.1580.10">
    <property type="match status" value="1"/>
</dbReference>
<dbReference type="Gene3D" id="3.40.50.300">
    <property type="entry name" value="P-loop containing nucleotide triphosphate hydrolases"/>
    <property type="match status" value="1"/>
</dbReference>
<dbReference type="InterPro" id="IPR030378">
    <property type="entry name" value="G_CP_dom"/>
</dbReference>
<dbReference type="InterPro" id="IPR006073">
    <property type="entry name" value="GTP-bd"/>
</dbReference>
<dbReference type="InterPro" id="IPR023179">
    <property type="entry name" value="GTP-bd_ortho_bundle_sf"/>
</dbReference>
<dbReference type="InterPro" id="IPR019991">
    <property type="entry name" value="GTP-bd_ribosome_bgen"/>
</dbReference>
<dbReference type="InterPro" id="IPR016478">
    <property type="entry name" value="GTPase_MTG1"/>
</dbReference>
<dbReference type="InterPro" id="IPR027417">
    <property type="entry name" value="P-loop_NTPase"/>
</dbReference>
<dbReference type="NCBIfam" id="TIGR03596">
    <property type="entry name" value="GTPase_YlqF"/>
    <property type="match status" value="1"/>
</dbReference>
<dbReference type="PANTHER" id="PTHR45782">
    <property type="entry name" value="MITOCHONDRIAL RIBOSOME-ASSOCIATED GTPASE 1"/>
    <property type="match status" value="1"/>
</dbReference>
<dbReference type="PANTHER" id="PTHR45782:SF4">
    <property type="entry name" value="MITOCHONDRIAL RIBOSOME-ASSOCIATED GTPASE 1"/>
    <property type="match status" value="1"/>
</dbReference>
<dbReference type="Pfam" id="PF01926">
    <property type="entry name" value="MMR_HSR1"/>
    <property type="match status" value="1"/>
</dbReference>
<dbReference type="PIRSF" id="PIRSF006230">
    <property type="entry name" value="MG442"/>
    <property type="match status" value="1"/>
</dbReference>
<dbReference type="SUPFAM" id="SSF52540">
    <property type="entry name" value="P-loop containing nucleoside triphosphate hydrolases"/>
    <property type="match status" value="1"/>
</dbReference>
<dbReference type="PROSITE" id="PS51721">
    <property type="entry name" value="G_CP"/>
    <property type="match status" value="1"/>
</dbReference>
<feature type="chain" id="PRO_0000409881" description="Ribosome biogenesis GTPase A">
    <location>
        <begin position="1"/>
        <end position="283"/>
    </location>
</feature>
<feature type="domain" description="CP-type G" evidence="2">
    <location>
        <begin position="14"/>
        <end position="178"/>
    </location>
</feature>
<feature type="binding site" evidence="1">
    <location>
        <begin position="58"/>
        <end position="61"/>
    </location>
    <ligand>
        <name>GTP</name>
        <dbReference type="ChEBI" id="CHEBI:37565"/>
    </ligand>
</feature>
<feature type="binding site" evidence="1">
    <location>
        <begin position="86"/>
        <end position="87"/>
    </location>
    <ligand>
        <name>GTP</name>
        <dbReference type="ChEBI" id="CHEBI:37565"/>
    </ligand>
</feature>
<feature type="binding site" evidence="1">
    <location>
        <begin position="130"/>
        <end position="135"/>
    </location>
    <ligand>
        <name>GTP</name>
        <dbReference type="ChEBI" id="CHEBI:37565"/>
    </ligand>
</feature>
<feature type="binding site" evidence="1">
    <location>
        <position position="174"/>
    </location>
    <ligand>
        <name>GTP</name>
        <dbReference type="ChEBI" id="CHEBI:37565"/>
    </ligand>
</feature>
<proteinExistence type="inferred from homology"/>
<organism>
    <name type="scientific">Bacillus licheniformis (strain ATCC 14580 / DSM 13 / JCM 2505 / CCUG 7422 / NBRC 12200 / NCIMB 9375 / NCTC 10341 / NRRL NRS-1264 / Gibson 46)</name>
    <dbReference type="NCBI Taxonomy" id="279010"/>
    <lineage>
        <taxon>Bacteria</taxon>
        <taxon>Bacillati</taxon>
        <taxon>Bacillota</taxon>
        <taxon>Bacilli</taxon>
        <taxon>Bacillales</taxon>
        <taxon>Bacillaceae</taxon>
        <taxon>Bacillus</taxon>
    </lineage>
</organism>
<keyword id="KW-0963">Cytoplasm</keyword>
<keyword id="KW-0342">GTP-binding</keyword>
<keyword id="KW-0378">Hydrolase</keyword>
<keyword id="KW-0547">Nucleotide-binding</keyword>
<keyword id="KW-1185">Reference proteome</keyword>
<keyword id="KW-0690">Ribosome biogenesis</keyword>
<keyword id="KW-0694">RNA-binding</keyword>
<name>RBGA_BACLD</name>
<reference evidence="4" key="1">
    <citation type="journal article" date="2004" name="Genome Biol.">
        <title>Complete genome sequence of the industrial bacterium Bacillus licheniformis and comparisons with closely related Bacillus species.</title>
        <authorList>
            <person name="Rey M.W."/>
            <person name="Ramaiya P."/>
            <person name="Nelson B.A."/>
            <person name="Brody-Karpin S.D."/>
            <person name="Zaretsky E.J."/>
            <person name="Tang M."/>
            <person name="Lopez de Leon A."/>
            <person name="Xiang H."/>
            <person name="Gusti V."/>
            <person name="Clausen I.G."/>
            <person name="Olsen P.B."/>
            <person name="Rasmussen M.D."/>
            <person name="Andersen J.T."/>
            <person name="Joergensen P.L."/>
            <person name="Larsen T.S."/>
            <person name="Sorokin A."/>
            <person name="Bolotin A."/>
            <person name="Lapidus A."/>
            <person name="Galleron N."/>
            <person name="Ehrlich S.D."/>
            <person name="Berka R.M."/>
        </authorList>
    </citation>
    <scope>NUCLEOTIDE SEQUENCE [LARGE SCALE GENOMIC DNA]</scope>
    <source>
        <strain evidence="4">ATCC 14580 / DSM 13 / JCM 2505 / CCUG 7422 / NBRC 12200 / NCIMB 9375 / NCTC 10341 / NRRL NRS-1264 / Gibson 46</strain>
    </source>
</reference>
<reference evidence="5" key="2">
    <citation type="journal article" date="2004" name="J. Mol. Microbiol. Biotechnol.">
        <title>The complete genome sequence of Bacillus licheniformis DSM13, an organism with great industrial potential.</title>
        <authorList>
            <person name="Veith B."/>
            <person name="Herzberg C."/>
            <person name="Steckel S."/>
            <person name="Feesche J."/>
            <person name="Maurer K.H."/>
            <person name="Ehrenreich P."/>
            <person name="Baeumer S."/>
            <person name="Henne A."/>
            <person name="Liesegang H."/>
            <person name="Merkl R."/>
            <person name="Ehrenreich A."/>
            <person name="Gottschalk G."/>
        </authorList>
    </citation>
    <scope>NUCLEOTIDE SEQUENCE [LARGE SCALE GENOMIC DNA]</scope>
    <source>
        <strain evidence="5">ATCC 14580 / DSM 13 / JCM 2505 / CCUG 7422 / NBRC 12200 / NCIMB 9375 / NCTC 10341 / NRRL NRS-1264 / Gibson 46</strain>
    </source>
</reference>
<gene>
    <name evidence="4" type="primary">rbgA</name>
    <name evidence="5" type="synonym">ylqF</name>
    <name type="ordered locus">BL01289</name>
    <name type="ordered locus">BLi01825</name>
</gene>
<sequence>MVIQWFPGHMAKARREVTEKLKLIDIVYELVDARIPMSSRNPMIEDILKNKPRIMLLNKADKADSSVTKAWKQHFEKDGIPTLAINSVNGQGLNQILPASKELLKEKFDKMKAKGVKPRAIRALIVGIPNVGKSTLINRLAKKNIAKTGDRPGVTTAQQWVKVGKELELLDTPGILWPKFEDELVGLRLAATGAIKDSIINLQDVAVYGLRFLEENYPERLKKRYDLEEIPEEIAALFDEIGKKRGCLMAGGEINYDKTTEVIIRDIRTEKFGPLSFEKPEDM</sequence>
<comment type="function">
    <text evidence="1">Essential protein that is required for a late step of 50S ribosomal subunit assembly. Has GTPase activity that is stimulated by interaction with the immature 50S ribosome subunit. Binds to the 23S rRNA. Required for the association of ribosomal proteins rplP and rpmA with the large subunit (By similarity).</text>
</comment>
<comment type="subunit">
    <text evidence="1">Interacts with ctc. Interacts with the immature 50S ribosome subunit. 2 molecules of rbgA bind to one 50S subunit (By similarity).</text>
</comment>
<comment type="subcellular location">
    <subcellularLocation>
        <location evidence="1 3">Cytoplasm</location>
    </subcellularLocation>
</comment>
<comment type="similarity">
    <text evidence="2">Belongs to the TRAFAC class YlqF/YawG GTPase family. MTG1 subfamily.</text>
</comment>
<evidence type="ECO:0000250" key="1">
    <source>
        <dbReference type="UniProtKB" id="O31743"/>
    </source>
</evidence>
<evidence type="ECO:0000255" key="2">
    <source>
        <dbReference type="PROSITE-ProRule" id="PRU01058"/>
    </source>
</evidence>
<evidence type="ECO:0000305" key="3"/>
<evidence type="ECO:0000312" key="4">
    <source>
        <dbReference type="EMBL" id="AAU23360.1"/>
    </source>
</evidence>
<evidence type="ECO:0000312" key="5">
    <source>
        <dbReference type="EMBL" id="AAU40720.1"/>
    </source>
</evidence>